<proteinExistence type="evidence at transcript level"/>
<keyword id="KW-0025">Alternative splicing</keyword>
<keyword id="KW-0121">Carboxypeptidase</keyword>
<keyword id="KW-0325">Glycoprotein</keyword>
<keyword id="KW-0378">Hydrolase</keyword>
<keyword id="KW-0645">Protease</keyword>
<keyword id="KW-1185">Reference proteome</keyword>
<keyword id="KW-0964">Secreted</keyword>
<keyword id="KW-0732">Signal</keyword>
<reference key="1">
    <citation type="journal article" date="1999" name="Nature">
        <title>Sequence and analysis of chromosome 2 of the plant Arabidopsis thaliana.</title>
        <authorList>
            <person name="Lin X."/>
            <person name="Kaul S."/>
            <person name="Rounsley S.D."/>
            <person name="Shea T.P."/>
            <person name="Benito M.-I."/>
            <person name="Town C.D."/>
            <person name="Fujii C.Y."/>
            <person name="Mason T.M."/>
            <person name="Bowman C.L."/>
            <person name="Barnstead M.E."/>
            <person name="Feldblyum T.V."/>
            <person name="Buell C.R."/>
            <person name="Ketchum K.A."/>
            <person name="Lee J.J."/>
            <person name="Ronning C.M."/>
            <person name="Koo H.L."/>
            <person name="Moffat K.S."/>
            <person name="Cronin L.A."/>
            <person name="Shen M."/>
            <person name="Pai G."/>
            <person name="Van Aken S."/>
            <person name="Umayam L."/>
            <person name="Tallon L.J."/>
            <person name="Gill J.E."/>
            <person name="Adams M.D."/>
            <person name="Carrera A.J."/>
            <person name="Creasy T.H."/>
            <person name="Goodman H.M."/>
            <person name="Somerville C.R."/>
            <person name="Copenhaver G.P."/>
            <person name="Preuss D."/>
            <person name="Nierman W.C."/>
            <person name="White O."/>
            <person name="Eisen J.A."/>
            <person name="Salzberg S.L."/>
            <person name="Fraser C.M."/>
            <person name="Venter J.C."/>
        </authorList>
    </citation>
    <scope>NUCLEOTIDE SEQUENCE [LARGE SCALE GENOMIC DNA]</scope>
    <source>
        <strain>cv. Columbia</strain>
    </source>
</reference>
<reference key="2">
    <citation type="journal article" date="2017" name="Plant J.">
        <title>Araport11: a complete reannotation of the Arabidopsis thaliana reference genome.</title>
        <authorList>
            <person name="Cheng C.Y."/>
            <person name="Krishnakumar V."/>
            <person name="Chan A.P."/>
            <person name="Thibaud-Nissen F."/>
            <person name="Schobel S."/>
            <person name="Town C.D."/>
        </authorList>
    </citation>
    <scope>GENOME REANNOTATION</scope>
    <source>
        <strain>cv. Columbia</strain>
    </source>
</reference>
<reference key="3">
    <citation type="journal article" date="2003" name="Science">
        <title>Empirical analysis of transcriptional activity in the Arabidopsis genome.</title>
        <authorList>
            <person name="Yamada K."/>
            <person name="Lim J."/>
            <person name="Dale J.M."/>
            <person name="Chen H."/>
            <person name="Shinn P."/>
            <person name="Palm C.J."/>
            <person name="Southwick A.M."/>
            <person name="Wu H.C."/>
            <person name="Kim C.J."/>
            <person name="Nguyen M."/>
            <person name="Pham P.K."/>
            <person name="Cheuk R.F."/>
            <person name="Karlin-Newmann G."/>
            <person name="Liu S.X."/>
            <person name="Lam B."/>
            <person name="Sakano H."/>
            <person name="Wu T."/>
            <person name="Yu G."/>
            <person name="Miranda M."/>
            <person name="Quach H.L."/>
            <person name="Tripp M."/>
            <person name="Chang C.H."/>
            <person name="Lee J.M."/>
            <person name="Toriumi M.J."/>
            <person name="Chan M.M."/>
            <person name="Tang C.C."/>
            <person name="Onodera C.S."/>
            <person name="Deng J.M."/>
            <person name="Akiyama K."/>
            <person name="Ansari Y."/>
            <person name="Arakawa T."/>
            <person name="Banh J."/>
            <person name="Banno F."/>
            <person name="Bowser L."/>
            <person name="Brooks S.Y."/>
            <person name="Carninci P."/>
            <person name="Chao Q."/>
            <person name="Choy N."/>
            <person name="Enju A."/>
            <person name="Goldsmith A.D."/>
            <person name="Gurjal M."/>
            <person name="Hansen N.F."/>
            <person name="Hayashizaki Y."/>
            <person name="Johnson-Hopson C."/>
            <person name="Hsuan V.W."/>
            <person name="Iida K."/>
            <person name="Karnes M."/>
            <person name="Khan S."/>
            <person name="Koesema E."/>
            <person name="Ishida J."/>
            <person name="Jiang P.X."/>
            <person name="Jones T."/>
            <person name="Kawai J."/>
            <person name="Kamiya A."/>
            <person name="Meyers C."/>
            <person name="Nakajima M."/>
            <person name="Narusaka M."/>
            <person name="Seki M."/>
            <person name="Sakurai T."/>
            <person name="Satou M."/>
            <person name="Tamse R."/>
            <person name="Vaysberg M."/>
            <person name="Wallender E.K."/>
            <person name="Wong C."/>
            <person name="Yamamura Y."/>
            <person name="Yuan S."/>
            <person name="Shinozaki K."/>
            <person name="Davis R.W."/>
            <person name="Theologis A."/>
            <person name="Ecker J.R."/>
        </authorList>
    </citation>
    <scope>NUCLEOTIDE SEQUENCE [LARGE SCALE MRNA] (ISOFORM 1)</scope>
    <source>
        <strain>cv. Columbia</strain>
    </source>
</reference>
<reference key="4">
    <citation type="submission" date="2004-09" db="EMBL/GenBank/DDBJ databases">
        <title>Large-scale analysis of RIKEN Arabidopsis full-length (RAFL) cDNAs.</title>
        <authorList>
            <person name="Totoki Y."/>
            <person name="Seki M."/>
            <person name="Ishida J."/>
            <person name="Nakajima M."/>
            <person name="Enju A."/>
            <person name="Kamiya A."/>
            <person name="Narusaka M."/>
            <person name="Shin-i T."/>
            <person name="Nakagawa M."/>
            <person name="Sakamoto N."/>
            <person name="Oishi K."/>
            <person name="Kohara Y."/>
            <person name="Kobayashi M."/>
            <person name="Toyoda A."/>
            <person name="Sakaki Y."/>
            <person name="Sakurai T."/>
            <person name="Iida K."/>
            <person name="Akiyama K."/>
            <person name="Satou M."/>
            <person name="Toyoda T."/>
            <person name="Konagaya A."/>
            <person name="Carninci P."/>
            <person name="Kawai J."/>
            <person name="Hayashizaki Y."/>
            <person name="Shinozaki K."/>
        </authorList>
    </citation>
    <scope>NUCLEOTIDE SEQUENCE [LARGE SCALE MRNA] (ISOFORM 2)</scope>
    <source>
        <strain>cv. Columbia</strain>
    </source>
</reference>
<reference key="5">
    <citation type="journal article" date="2005" name="Plant Physiol.">
        <title>An expression and bioinformatics analysis of the Arabidopsis serine carboxypeptidase-like gene family.</title>
        <authorList>
            <person name="Fraser C.M."/>
            <person name="Rider L.W."/>
            <person name="Chapple C."/>
        </authorList>
    </citation>
    <scope>GENE FAMILY</scope>
    <scope>TISSUE SPECIFICITY</scope>
    <scope>NOMENCLATURE</scope>
</reference>
<sequence>MKTTVVYLVILCLIVSCTNGETKHVRKINSDGSEAWGYVEVRPKAHMFWWHYKSPYRVENPSKPWPIILWLQGGPGASGVGIGNFQEVGPLDTFLKPRNSTWLKKADLLFVDSPVGAGYSFVEGNQKDLYVKSDEEAAQDLTKLLQQLFNKNQTLNQSPLFIVAESYGGKIAVKLGLSVIDAVQSGKLKLHLGGVILGDSWISPEDFVFSWGPLLKHVSRLDDNGLDSSNSLAEKIKTQIKNGEYVGATQTWMDLENLISSKSNFVDFYNFLLDTGMDPVSLTTSLKIKKEEKIKKYSRYLNDMRSLSDVEDVEGDLDKLMNGVIKKKLKIIPNDLIWGNNSDDVFTAMEAAFMKPVIEDVDELLATGVDVTIYNGQLDVICSTSGTEAWVHKLRWEGLEEFKKMEREPLFCESDRATRGFTKSYKNLHFYWILGAGHFVPVDEPCVALKMVGEITKSPQL</sequence>
<accession>Q67Y83</accession>
<accession>Q680E1</accession>
<accession>Q945N4</accession>
<accession>Q9SJJ9</accession>
<evidence type="ECO:0000250" key="1"/>
<evidence type="ECO:0000255" key="2"/>
<evidence type="ECO:0000255" key="3">
    <source>
        <dbReference type="PROSITE-ProRule" id="PRU10074"/>
    </source>
</evidence>
<evidence type="ECO:0000269" key="4">
    <source>
    </source>
</evidence>
<evidence type="ECO:0000303" key="5">
    <source ref="4"/>
</evidence>
<evidence type="ECO:0000305" key="6"/>
<name>SCP51_ARATH</name>
<organism>
    <name type="scientific">Arabidopsis thaliana</name>
    <name type="common">Mouse-ear cress</name>
    <dbReference type="NCBI Taxonomy" id="3702"/>
    <lineage>
        <taxon>Eukaryota</taxon>
        <taxon>Viridiplantae</taxon>
        <taxon>Streptophyta</taxon>
        <taxon>Embryophyta</taxon>
        <taxon>Tracheophyta</taxon>
        <taxon>Spermatophyta</taxon>
        <taxon>Magnoliopsida</taxon>
        <taxon>eudicotyledons</taxon>
        <taxon>Gunneridae</taxon>
        <taxon>Pentapetalae</taxon>
        <taxon>rosids</taxon>
        <taxon>malvids</taxon>
        <taxon>Brassicales</taxon>
        <taxon>Brassicaceae</taxon>
        <taxon>Camelineae</taxon>
        <taxon>Arabidopsis</taxon>
    </lineage>
</organism>
<comment type="function">
    <text evidence="1">Probable carboxypeptidase.</text>
</comment>
<comment type="subcellular location">
    <subcellularLocation>
        <location evidence="6">Secreted</location>
    </subcellularLocation>
</comment>
<comment type="alternative products">
    <event type="alternative splicing"/>
    <isoform>
        <id>Q67Y83-1</id>
        <name>1</name>
        <sequence type="displayed"/>
    </isoform>
    <isoform>
        <id>Q67Y83-2</id>
        <name>2</name>
        <sequence type="described" ref="VSP_022854 VSP_022855"/>
    </isoform>
</comment>
<comment type="tissue specificity">
    <text evidence="4">Expressed in seedlings, roots, flowers and siliques.</text>
</comment>
<comment type="similarity">
    <text evidence="6">Belongs to the peptidase S10 family.</text>
</comment>
<protein>
    <recommendedName>
        <fullName>Serine carboxypeptidase-like 51</fullName>
        <ecNumber>3.4.16.-</ecNumber>
    </recommendedName>
</protein>
<dbReference type="EC" id="3.4.16.-"/>
<dbReference type="EMBL" id="AC006929">
    <property type="protein sequence ID" value="AAD21510.2"/>
    <property type="molecule type" value="Genomic_DNA"/>
</dbReference>
<dbReference type="EMBL" id="CP002685">
    <property type="protein sequence ID" value="AEC08059.1"/>
    <property type="molecule type" value="Genomic_DNA"/>
</dbReference>
<dbReference type="EMBL" id="CP002685">
    <property type="protein sequence ID" value="AEC08060.1"/>
    <property type="molecule type" value="Genomic_DNA"/>
</dbReference>
<dbReference type="EMBL" id="AF412049">
    <property type="protein sequence ID" value="AAL06502.1"/>
    <property type="molecule type" value="mRNA"/>
</dbReference>
<dbReference type="EMBL" id="BT003041">
    <property type="protein sequence ID" value="AAO23606.1"/>
    <property type="molecule type" value="mRNA"/>
</dbReference>
<dbReference type="EMBL" id="AK175926">
    <property type="protein sequence ID" value="BAD43689.1"/>
    <property type="molecule type" value="mRNA"/>
</dbReference>
<dbReference type="EMBL" id="AK176585">
    <property type="protein sequence ID" value="BAD44348.1"/>
    <property type="molecule type" value="mRNA"/>
</dbReference>
<dbReference type="PIR" id="E84678">
    <property type="entry name" value="E84678"/>
</dbReference>
<dbReference type="RefSeq" id="NP_001031434.1">
    <molecule id="Q67Y83-2"/>
    <property type="nucleotide sequence ID" value="NM_001036357.1"/>
</dbReference>
<dbReference type="RefSeq" id="NP_565663.1">
    <molecule id="Q67Y83-1"/>
    <property type="nucleotide sequence ID" value="NM_128351.3"/>
</dbReference>
<dbReference type="SMR" id="Q67Y83"/>
<dbReference type="FunCoup" id="Q67Y83">
    <property type="interactions" value="442"/>
</dbReference>
<dbReference type="STRING" id="3702.Q67Y83"/>
<dbReference type="ESTHER" id="arath-SCP51">
    <property type="family name" value="Carboxypeptidase_S10"/>
</dbReference>
<dbReference type="MEROPS" id="S10.017"/>
<dbReference type="GlyCosmos" id="Q67Y83">
    <property type="glycosylation" value="3 sites, No reported glycans"/>
</dbReference>
<dbReference type="GlyGen" id="Q67Y83">
    <property type="glycosylation" value="3 sites"/>
</dbReference>
<dbReference type="PaxDb" id="3702-AT2G27920.1"/>
<dbReference type="ProteomicsDB" id="232707">
    <molecule id="Q67Y83-1"/>
</dbReference>
<dbReference type="EnsemblPlants" id="AT2G27920.1">
    <molecule id="Q67Y83-1"/>
    <property type="protein sequence ID" value="AT2G27920.1"/>
    <property type="gene ID" value="AT2G27920"/>
</dbReference>
<dbReference type="EnsemblPlants" id="AT2G27920.3">
    <molecule id="Q67Y83-2"/>
    <property type="protein sequence ID" value="AT2G27920.3"/>
    <property type="gene ID" value="AT2G27920"/>
</dbReference>
<dbReference type="GeneID" id="817336"/>
<dbReference type="Gramene" id="AT2G27920.1">
    <molecule id="Q67Y83-1"/>
    <property type="protein sequence ID" value="AT2G27920.1"/>
    <property type="gene ID" value="AT2G27920"/>
</dbReference>
<dbReference type="Gramene" id="AT2G27920.3">
    <molecule id="Q67Y83-2"/>
    <property type="protein sequence ID" value="AT2G27920.3"/>
    <property type="gene ID" value="AT2G27920"/>
</dbReference>
<dbReference type="KEGG" id="ath:AT2G27920"/>
<dbReference type="Araport" id="AT2G27920"/>
<dbReference type="TAIR" id="AT2G27920">
    <property type="gene designation" value="SCPL51"/>
</dbReference>
<dbReference type="eggNOG" id="KOG1283">
    <property type="taxonomic scope" value="Eukaryota"/>
</dbReference>
<dbReference type="HOGENOM" id="CLU_008523_1_0_1"/>
<dbReference type="InParanoid" id="Q67Y83"/>
<dbReference type="OMA" id="TVNWIDK"/>
<dbReference type="PhylomeDB" id="Q67Y83"/>
<dbReference type="PRO" id="PR:Q67Y83"/>
<dbReference type="Proteomes" id="UP000006548">
    <property type="component" value="Chromosome 2"/>
</dbReference>
<dbReference type="ExpressionAtlas" id="Q67Y83">
    <property type="expression patterns" value="baseline and differential"/>
</dbReference>
<dbReference type="GO" id="GO:0005576">
    <property type="term" value="C:extracellular region"/>
    <property type="evidence" value="ECO:0007669"/>
    <property type="project" value="UniProtKB-SubCell"/>
</dbReference>
<dbReference type="GO" id="GO:0004185">
    <property type="term" value="F:serine-type carboxypeptidase activity"/>
    <property type="evidence" value="ECO:0007669"/>
    <property type="project" value="InterPro"/>
</dbReference>
<dbReference type="GO" id="GO:0006508">
    <property type="term" value="P:proteolysis"/>
    <property type="evidence" value="ECO:0007669"/>
    <property type="project" value="UniProtKB-KW"/>
</dbReference>
<dbReference type="FunFam" id="3.40.50.1820:FF:000123">
    <property type="entry name" value="Carboxypeptidase"/>
    <property type="match status" value="1"/>
</dbReference>
<dbReference type="Gene3D" id="3.40.50.1820">
    <property type="entry name" value="alpha/beta hydrolase"/>
    <property type="match status" value="1"/>
</dbReference>
<dbReference type="InterPro" id="IPR029058">
    <property type="entry name" value="AB_hydrolase_fold"/>
</dbReference>
<dbReference type="InterPro" id="IPR001563">
    <property type="entry name" value="Peptidase_S10"/>
</dbReference>
<dbReference type="InterPro" id="IPR018202">
    <property type="entry name" value="Ser_caboxypep_ser_AS"/>
</dbReference>
<dbReference type="PANTHER" id="PTHR11802:SF3">
    <property type="entry name" value="RETINOID-INDUCIBLE SERINE CARBOXYPEPTIDASE"/>
    <property type="match status" value="1"/>
</dbReference>
<dbReference type="PANTHER" id="PTHR11802">
    <property type="entry name" value="SERINE PROTEASE FAMILY S10 SERINE CARBOXYPEPTIDASE"/>
    <property type="match status" value="1"/>
</dbReference>
<dbReference type="Pfam" id="PF00450">
    <property type="entry name" value="Peptidase_S10"/>
    <property type="match status" value="1"/>
</dbReference>
<dbReference type="PRINTS" id="PR00724">
    <property type="entry name" value="CRBOXYPTASEC"/>
</dbReference>
<dbReference type="SUPFAM" id="SSF53474">
    <property type="entry name" value="alpha/beta-Hydrolases"/>
    <property type="match status" value="1"/>
</dbReference>
<dbReference type="PROSITE" id="PS00131">
    <property type="entry name" value="CARBOXYPEPT_SER_SER"/>
    <property type="match status" value="1"/>
</dbReference>
<gene>
    <name type="primary">SCPL51</name>
    <name type="ordered locus">At2g27920</name>
    <name type="ORF">T1E2.16</name>
</gene>
<feature type="signal peptide" evidence="2">
    <location>
        <begin position="1"/>
        <end position="20"/>
    </location>
</feature>
<feature type="chain" id="PRO_0000274665" description="Serine carboxypeptidase-like 51">
    <location>
        <begin position="21"/>
        <end position="461"/>
    </location>
</feature>
<feature type="active site" evidence="3">
    <location>
        <position position="166"/>
    </location>
</feature>
<feature type="active site" evidence="3">
    <location>
        <position position="379"/>
    </location>
</feature>
<feature type="active site" evidence="3">
    <location>
        <position position="438"/>
    </location>
</feature>
<feature type="glycosylation site" description="N-linked (GlcNAc...) asparagine" evidence="2">
    <location>
        <position position="99"/>
    </location>
</feature>
<feature type="glycosylation site" description="N-linked (GlcNAc...) asparagine" evidence="2">
    <location>
        <position position="152"/>
    </location>
</feature>
<feature type="glycosylation site" description="N-linked (GlcNAc...) asparagine" evidence="2">
    <location>
        <position position="340"/>
    </location>
</feature>
<feature type="splice variant" id="VSP_022854" description="In isoform 2." evidence="5">
    <location>
        <begin position="1"/>
        <end position="66"/>
    </location>
</feature>
<feature type="splice variant" id="VSP_022855" description="In isoform 2." evidence="5">
    <original>IILWLQGGPGASGVGIGNFQEVGPLDTFLKPRNSTWLKKADLLFVDSP</original>
    <variation>MAYHPLAPRWTWSFRGWYREFSGGWTIRHISQAQKLNLVEESRSFVC</variation>
    <location>
        <begin position="67"/>
        <end position="114"/>
    </location>
</feature>
<feature type="sequence conflict" description="In Ref. 4; BAD43689." evidence="6" ref="4">
    <original>G</original>
    <variation>E</variation>
    <location>
        <position position="398"/>
    </location>
</feature>
<feature type="sequence conflict" description="In Ref. 4; BAD44348." evidence="6" ref="4">
    <original>E</original>
    <variation>V</variation>
    <location>
        <position position="401"/>
    </location>
</feature>